<evidence type="ECO:0000255" key="1">
    <source>
        <dbReference type="HAMAP-Rule" id="MF_00821"/>
    </source>
</evidence>
<evidence type="ECO:0000305" key="2"/>
<organism>
    <name type="scientific">Escherichia coli O6:H1 (strain CFT073 / ATCC 700928 / UPEC)</name>
    <dbReference type="NCBI Taxonomy" id="199310"/>
    <lineage>
        <taxon>Bacteria</taxon>
        <taxon>Pseudomonadati</taxon>
        <taxon>Pseudomonadota</taxon>
        <taxon>Gammaproteobacteria</taxon>
        <taxon>Enterobacterales</taxon>
        <taxon>Enterobacteriaceae</taxon>
        <taxon>Escherichia</taxon>
    </lineage>
</organism>
<name>SECB_ECOL6</name>
<accession>P0AG87</accession>
<accession>P15040</accession>
<dbReference type="EMBL" id="AE014075">
    <property type="protein sequence ID" value="AAN82868.1"/>
    <property type="status" value="ALT_INIT"/>
    <property type="molecule type" value="Genomic_DNA"/>
</dbReference>
<dbReference type="RefSeq" id="WP_000003377.1">
    <property type="nucleotide sequence ID" value="NZ_CP051263.1"/>
</dbReference>
<dbReference type="SMR" id="P0AG87"/>
<dbReference type="STRING" id="199310.c4432"/>
<dbReference type="GeneID" id="86944403"/>
<dbReference type="KEGG" id="ecc:c4432"/>
<dbReference type="eggNOG" id="COG1952">
    <property type="taxonomic scope" value="Bacteria"/>
</dbReference>
<dbReference type="HOGENOM" id="CLU_111574_1_0_6"/>
<dbReference type="Proteomes" id="UP000001410">
    <property type="component" value="Chromosome"/>
</dbReference>
<dbReference type="GO" id="GO:0005737">
    <property type="term" value="C:cytoplasm"/>
    <property type="evidence" value="ECO:0007669"/>
    <property type="project" value="UniProtKB-SubCell"/>
</dbReference>
<dbReference type="GO" id="GO:0051082">
    <property type="term" value="F:unfolded protein binding"/>
    <property type="evidence" value="ECO:0007669"/>
    <property type="project" value="InterPro"/>
</dbReference>
<dbReference type="GO" id="GO:0006457">
    <property type="term" value="P:protein folding"/>
    <property type="evidence" value="ECO:0007669"/>
    <property type="project" value="UniProtKB-UniRule"/>
</dbReference>
<dbReference type="GO" id="GO:0051262">
    <property type="term" value="P:protein tetramerization"/>
    <property type="evidence" value="ECO:0007669"/>
    <property type="project" value="InterPro"/>
</dbReference>
<dbReference type="GO" id="GO:0015031">
    <property type="term" value="P:protein transport"/>
    <property type="evidence" value="ECO:0007669"/>
    <property type="project" value="UniProtKB-UniRule"/>
</dbReference>
<dbReference type="CDD" id="cd00557">
    <property type="entry name" value="Translocase_SecB"/>
    <property type="match status" value="1"/>
</dbReference>
<dbReference type="FunFam" id="3.10.420.10:FF:000001">
    <property type="entry name" value="Protein-export chaperone SecB"/>
    <property type="match status" value="1"/>
</dbReference>
<dbReference type="Gene3D" id="3.10.420.10">
    <property type="entry name" value="SecB-like"/>
    <property type="match status" value="1"/>
</dbReference>
<dbReference type="HAMAP" id="MF_00821">
    <property type="entry name" value="SecB"/>
    <property type="match status" value="1"/>
</dbReference>
<dbReference type="InterPro" id="IPR003708">
    <property type="entry name" value="SecB"/>
</dbReference>
<dbReference type="InterPro" id="IPR035958">
    <property type="entry name" value="SecB-like_sf"/>
</dbReference>
<dbReference type="NCBIfam" id="NF004390">
    <property type="entry name" value="PRK05751.1-1"/>
    <property type="match status" value="1"/>
</dbReference>
<dbReference type="NCBIfam" id="NF004393">
    <property type="entry name" value="PRK05751.1-4"/>
    <property type="match status" value="1"/>
</dbReference>
<dbReference type="NCBIfam" id="TIGR00809">
    <property type="entry name" value="secB"/>
    <property type="match status" value="1"/>
</dbReference>
<dbReference type="PANTHER" id="PTHR36918">
    <property type="match status" value="1"/>
</dbReference>
<dbReference type="PANTHER" id="PTHR36918:SF1">
    <property type="entry name" value="PROTEIN-EXPORT PROTEIN SECB"/>
    <property type="match status" value="1"/>
</dbReference>
<dbReference type="Pfam" id="PF02556">
    <property type="entry name" value="SecB"/>
    <property type="match status" value="1"/>
</dbReference>
<dbReference type="PRINTS" id="PR01594">
    <property type="entry name" value="SECBCHAPRONE"/>
</dbReference>
<dbReference type="SUPFAM" id="SSF54611">
    <property type="entry name" value="SecB-like"/>
    <property type="match status" value="1"/>
</dbReference>
<sequence>MSEQNNTEMTFQIQRIYTKDISFEAPNAPHVFQKDWQPEVKLDLDTASSQLADDVYEVVLRVTVTASLGEETAFLCEVQQGGIFSIAGIEGTQMAHCLGAYCPNILFPYARECITSMVSRGTFPQLNLAPVNFDALFMNYLQQQAGEGTEEHQDA</sequence>
<protein>
    <recommendedName>
        <fullName evidence="1">Protein-export protein SecB</fullName>
    </recommendedName>
</protein>
<feature type="chain" id="PRO_0000055372" description="Protein-export protein SecB">
    <location>
        <begin position="1"/>
        <end position="155"/>
    </location>
</feature>
<comment type="function">
    <text evidence="1">One of the proteins required for the normal export of preproteins out of the cell cytoplasm. It is a molecular chaperone that binds to a subset of precursor proteins, maintaining them in a translocation-competent state. It also specifically binds to its receptor SecA.</text>
</comment>
<comment type="subunit">
    <text evidence="1">Homotetramer, a dimer of dimers. One homotetramer interacts with 1 SecA dimer.</text>
</comment>
<comment type="subcellular location">
    <subcellularLocation>
        <location evidence="1">Cytoplasm</location>
    </subcellularLocation>
</comment>
<comment type="similarity">
    <text evidence="1">Belongs to the SecB family.</text>
</comment>
<comment type="sequence caution" evidence="2">
    <conflict type="erroneous initiation">
        <sequence resource="EMBL-CDS" id="AAN82868"/>
    </conflict>
</comment>
<gene>
    <name evidence="1" type="primary">secB</name>
    <name type="ordered locus">c4432</name>
</gene>
<proteinExistence type="inferred from homology"/>
<keyword id="KW-0143">Chaperone</keyword>
<keyword id="KW-0963">Cytoplasm</keyword>
<keyword id="KW-0653">Protein transport</keyword>
<keyword id="KW-1185">Reference proteome</keyword>
<keyword id="KW-0811">Translocation</keyword>
<keyword id="KW-0813">Transport</keyword>
<reference key="1">
    <citation type="journal article" date="2002" name="Proc. Natl. Acad. Sci. U.S.A.">
        <title>Extensive mosaic structure revealed by the complete genome sequence of uropathogenic Escherichia coli.</title>
        <authorList>
            <person name="Welch R.A."/>
            <person name="Burland V."/>
            <person name="Plunkett G. III"/>
            <person name="Redford P."/>
            <person name="Roesch P."/>
            <person name="Rasko D."/>
            <person name="Buckles E.L."/>
            <person name="Liou S.-R."/>
            <person name="Boutin A."/>
            <person name="Hackett J."/>
            <person name="Stroud D."/>
            <person name="Mayhew G.F."/>
            <person name="Rose D.J."/>
            <person name="Zhou S."/>
            <person name="Schwartz D.C."/>
            <person name="Perna N.T."/>
            <person name="Mobley H.L.T."/>
            <person name="Donnenberg M.S."/>
            <person name="Blattner F.R."/>
        </authorList>
    </citation>
    <scope>NUCLEOTIDE SEQUENCE [LARGE SCALE GENOMIC DNA]</scope>
    <source>
        <strain>CFT073 / ATCC 700928 / UPEC</strain>
    </source>
</reference>